<accession>C4YS65</accession>
<organism>
    <name type="scientific">Candida albicans (strain WO-1)</name>
    <name type="common">Yeast</name>
    <dbReference type="NCBI Taxonomy" id="294748"/>
    <lineage>
        <taxon>Eukaryota</taxon>
        <taxon>Fungi</taxon>
        <taxon>Dikarya</taxon>
        <taxon>Ascomycota</taxon>
        <taxon>Saccharomycotina</taxon>
        <taxon>Pichiomycetes</taxon>
        <taxon>Debaryomycetaceae</taxon>
        <taxon>Candida/Lodderomyces clade</taxon>
        <taxon>Candida</taxon>
    </lineage>
</organism>
<dbReference type="EC" id="3.6.5.-" evidence="1"/>
<dbReference type="EMBL" id="CM000312">
    <property type="protein sequence ID" value="EEQ46568.1"/>
    <property type="molecule type" value="Genomic_DNA"/>
</dbReference>
<dbReference type="SMR" id="C4YS65"/>
<dbReference type="PaxDb" id="5476-C4YS65"/>
<dbReference type="VEuPathDB" id="FungiDB:CAWG_04924"/>
<dbReference type="HOGENOM" id="CLU_011270_0_0_1"/>
<dbReference type="OMA" id="PIIKMTE"/>
<dbReference type="OrthoDB" id="23139at766764"/>
<dbReference type="Proteomes" id="UP000001429">
    <property type="component" value="Chromosome 6"/>
</dbReference>
<dbReference type="GO" id="GO:0005789">
    <property type="term" value="C:endoplasmic reticulum membrane"/>
    <property type="evidence" value="ECO:0007669"/>
    <property type="project" value="UniProtKB-SubCell"/>
</dbReference>
<dbReference type="GO" id="GO:0005525">
    <property type="term" value="F:GTP binding"/>
    <property type="evidence" value="ECO:0007669"/>
    <property type="project" value="UniProtKB-UniRule"/>
</dbReference>
<dbReference type="GO" id="GO:0003924">
    <property type="term" value="F:GTPase activity"/>
    <property type="evidence" value="ECO:0007669"/>
    <property type="project" value="UniProtKB-UniRule"/>
</dbReference>
<dbReference type="GO" id="GO:0016320">
    <property type="term" value="P:endoplasmic reticulum membrane fusion"/>
    <property type="evidence" value="ECO:0007669"/>
    <property type="project" value="TreeGrafter"/>
</dbReference>
<dbReference type="CDD" id="cd01851">
    <property type="entry name" value="GBP"/>
    <property type="match status" value="1"/>
</dbReference>
<dbReference type="FunFam" id="3.40.50.300:FF:000727">
    <property type="entry name" value="Protein SEY1 homolog"/>
    <property type="match status" value="1"/>
</dbReference>
<dbReference type="Gene3D" id="3.40.50.300">
    <property type="entry name" value="P-loop containing nucleotide triphosphate hydrolases"/>
    <property type="match status" value="1"/>
</dbReference>
<dbReference type="HAMAP" id="MF_03109">
    <property type="entry name" value="Sey1"/>
    <property type="match status" value="1"/>
</dbReference>
<dbReference type="InterPro" id="IPR030386">
    <property type="entry name" value="G_GB1_RHD3_dom"/>
</dbReference>
<dbReference type="InterPro" id="IPR027417">
    <property type="entry name" value="P-loop_NTPase"/>
</dbReference>
<dbReference type="InterPro" id="IPR008803">
    <property type="entry name" value="RHD3/Sey1"/>
</dbReference>
<dbReference type="InterPro" id="IPR046758">
    <property type="entry name" value="Sey1/RHD3-like_3HB"/>
</dbReference>
<dbReference type="PANTHER" id="PTHR45923">
    <property type="entry name" value="PROTEIN SEY1"/>
    <property type="match status" value="1"/>
</dbReference>
<dbReference type="PANTHER" id="PTHR45923:SF2">
    <property type="entry name" value="PROTEIN SEY1"/>
    <property type="match status" value="1"/>
</dbReference>
<dbReference type="Pfam" id="PF05879">
    <property type="entry name" value="RHD3_GTPase"/>
    <property type="match status" value="1"/>
</dbReference>
<dbReference type="Pfam" id="PF20428">
    <property type="entry name" value="Sey1_3HB"/>
    <property type="match status" value="1"/>
</dbReference>
<dbReference type="SUPFAM" id="SSF52540">
    <property type="entry name" value="P-loop containing nucleoside triphosphate hydrolases"/>
    <property type="match status" value="1"/>
</dbReference>
<dbReference type="PROSITE" id="PS51715">
    <property type="entry name" value="G_GB1_RHD3"/>
    <property type="match status" value="1"/>
</dbReference>
<proteinExistence type="inferred from homology"/>
<feature type="chain" id="PRO_0000384976" description="Protein SEY1">
    <location>
        <begin position="1"/>
        <end position="790"/>
    </location>
</feature>
<feature type="topological domain" description="Cytoplasmic" evidence="1">
    <location>
        <begin position="1"/>
        <end position="692"/>
    </location>
</feature>
<feature type="transmembrane region" description="Helical" evidence="1">
    <location>
        <begin position="693"/>
        <end position="713"/>
    </location>
</feature>
<feature type="topological domain" description="Lumenal" evidence="1">
    <location>
        <begin position="714"/>
        <end position="716"/>
    </location>
</feature>
<feature type="transmembrane region" description="Helical" evidence="1">
    <location>
        <begin position="717"/>
        <end position="737"/>
    </location>
</feature>
<feature type="topological domain" description="Cytoplasmic" evidence="1">
    <location>
        <begin position="738"/>
        <end position="790"/>
    </location>
</feature>
<feature type="domain" description="GB1/RHD3-type G" evidence="2">
    <location>
        <begin position="55"/>
        <end position="284"/>
    </location>
</feature>
<feature type="binding site" evidence="1">
    <location>
        <begin position="65"/>
        <end position="72"/>
    </location>
    <ligand>
        <name>GTP</name>
        <dbReference type="ChEBI" id="CHEBI:37565"/>
    </ligand>
</feature>
<comment type="function">
    <text evidence="1">Cooperates with the reticulon proteins and tubule-shaping DP1 family proteins to generate and maintain the structure of the tubular endoplasmic reticulum network. Has GTPase activity, which is required for its function in ER organization.</text>
</comment>
<comment type="subcellular location">
    <subcellularLocation>
        <location evidence="1">Endoplasmic reticulum membrane</location>
        <topology evidence="1">Multi-pass membrane protein</topology>
    </subcellularLocation>
    <text evidence="1">Enriched in the cortical ER. Concentrated in punctae along the ER tubules.</text>
</comment>
<comment type="similarity">
    <text evidence="2">Belongs to the TRAFAC class dynamin-like GTPase superfamily. GB1/RHD3 GTPase family. RHD3 subfamily.</text>
</comment>
<sequence length="790" mass="90211">MELSEGELSHTSSSSSFVPVDQRQLQDAIQIIDENKHFNTGILDYINKTSPADVGNNYHIISVFGSQSTGKSTLLNRLFNTNFDVMDESNRQQTTKGIWLAYSPVVSTTLGHTTSKSNILVMDVEGTDGRERGEDQDFERKAALFALSTSEVLIINIWETQVGLYQGANMGLLKTVFEVNLSLFGKSKLETHNDHKVLLLIVIRDHVGVTPVESLAKTFTSDLQNMWSSLAKPAELEHLQFADFFDVTFHALNHKVLQPKEFGEGINRLGDRLVVSNELFKPEYHHDVPIDGWTMYAERCWEQIETNKDLDLPTQQILVAQFKCDEIVESVFQEFLAKYQHHFKEVDAAPDFEELGALFADLRQDAFEDYDASASRYNKAVYEQKRKKLRWLINDKLKEVFDVHAKNLCNTLLEKFEKDLVALKGKDFAVNVKTLSTKLVEDVNFQVSLMSLQGDLSLDEIILALTKDIDAIVAKQQVIELNSIVNKSVKKLSASLSKSIQFELGDPNEETWDNVLQQFKGVYEKFGGDFGLGTSSTQNQQAIEKFKFKSWCQFYDVTHKLISREKLLALLQDRFDDKFRYDENGLPKLYLNEQDLEKTFAVAKQHALQVLPILTFAKLTDGSEIVPDYDIFDSKLREQFLGGYDDSDDEEDHCFAEIITEQEKSEVLAKFKKEVDAKYIETKRSIVQHITQIPYYIYLIILVLGWNEFMAIIRNPLFFSLSIVLGATVYVLYYLGLLRPALVVAQRTMDEVIVMAKTKLREVLIDDHEVTGRQLNKMAGSKENIELDDM</sequence>
<gene>
    <name evidence="1" type="primary">SEY1</name>
    <name type="ORF">CAWG_04924</name>
</gene>
<evidence type="ECO:0000255" key="1">
    <source>
        <dbReference type="HAMAP-Rule" id="MF_03109"/>
    </source>
</evidence>
<evidence type="ECO:0000255" key="2">
    <source>
        <dbReference type="PROSITE-ProRule" id="PRU01052"/>
    </source>
</evidence>
<keyword id="KW-0256">Endoplasmic reticulum</keyword>
<keyword id="KW-0342">GTP-binding</keyword>
<keyword id="KW-0378">Hydrolase</keyword>
<keyword id="KW-0472">Membrane</keyword>
<keyword id="KW-0547">Nucleotide-binding</keyword>
<keyword id="KW-0812">Transmembrane</keyword>
<keyword id="KW-1133">Transmembrane helix</keyword>
<name>SEY1_CANAW</name>
<protein>
    <recommendedName>
        <fullName evidence="1">Protein SEY1</fullName>
        <ecNumber evidence="1">3.6.5.-</ecNumber>
    </recommendedName>
</protein>
<reference key="1">
    <citation type="journal article" date="2009" name="Nature">
        <title>Evolution of pathogenicity and sexual reproduction in eight Candida genomes.</title>
        <authorList>
            <person name="Butler G."/>
            <person name="Rasmussen M.D."/>
            <person name="Lin M.F."/>
            <person name="Santos M.A.S."/>
            <person name="Sakthikumar S."/>
            <person name="Munro C.A."/>
            <person name="Rheinbay E."/>
            <person name="Grabherr M."/>
            <person name="Forche A."/>
            <person name="Reedy J.L."/>
            <person name="Agrafioti I."/>
            <person name="Arnaud M.B."/>
            <person name="Bates S."/>
            <person name="Brown A.J.P."/>
            <person name="Brunke S."/>
            <person name="Costanzo M.C."/>
            <person name="Fitzpatrick D.A."/>
            <person name="de Groot P.W.J."/>
            <person name="Harris D."/>
            <person name="Hoyer L.L."/>
            <person name="Hube B."/>
            <person name="Klis F.M."/>
            <person name="Kodira C."/>
            <person name="Lennard N."/>
            <person name="Logue M.E."/>
            <person name="Martin R."/>
            <person name="Neiman A.M."/>
            <person name="Nikolaou E."/>
            <person name="Quail M.A."/>
            <person name="Quinn J."/>
            <person name="Santos M.C."/>
            <person name="Schmitzberger F.F."/>
            <person name="Sherlock G."/>
            <person name="Shah P."/>
            <person name="Silverstein K.A.T."/>
            <person name="Skrzypek M.S."/>
            <person name="Soll D."/>
            <person name="Staggs R."/>
            <person name="Stansfield I."/>
            <person name="Stumpf M.P.H."/>
            <person name="Sudbery P.E."/>
            <person name="Srikantha T."/>
            <person name="Zeng Q."/>
            <person name="Berman J."/>
            <person name="Berriman M."/>
            <person name="Heitman J."/>
            <person name="Gow N.A.R."/>
            <person name="Lorenz M.C."/>
            <person name="Birren B.W."/>
            <person name="Kellis M."/>
            <person name="Cuomo C.A."/>
        </authorList>
    </citation>
    <scope>NUCLEOTIDE SEQUENCE [LARGE SCALE GENOMIC DNA]</scope>
    <source>
        <strain>WO-1</strain>
    </source>
</reference>